<accession>A5GM25</accession>
<gene>
    <name type="primary">acyP</name>
    <name type="ordered locus">SynWH7803_1564</name>
</gene>
<dbReference type="EC" id="3.6.1.7"/>
<dbReference type="EMBL" id="CT971583">
    <property type="protein sequence ID" value="CAK23990.1"/>
    <property type="molecule type" value="Genomic_DNA"/>
</dbReference>
<dbReference type="SMR" id="A5GM25"/>
<dbReference type="STRING" id="32051.SynWH7803_1564"/>
<dbReference type="KEGG" id="syx:SynWH7803_1564"/>
<dbReference type="eggNOG" id="COG1254">
    <property type="taxonomic scope" value="Bacteria"/>
</dbReference>
<dbReference type="HOGENOM" id="CLU_141932_1_0_3"/>
<dbReference type="OrthoDB" id="9808093at2"/>
<dbReference type="Proteomes" id="UP000001566">
    <property type="component" value="Chromosome"/>
</dbReference>
<dbReference type="GO" id="GO:0003998">
    <property type="term" value="F:acylphosphatase activity"/>
    <property type="evidence" value="ECO:0007669"/>
    <property type="project" value="UniProtKB-EC"/>
</dbReference>
<dbReference type="Gene3D" id="3.30.70.100">
    <property type="match status" value="1"/>
</dbReference>
<dbReference type="InterPro" id="IPR020456">
    <property type="entry name" value="Acylphosphatase"/>
</dbReference>
<dbReference type="InterPro" id="IPR001792">
    <property type="entry name" value="Acylphosphatase-like_dom"/>
</dbReference>
<dbReference type="InterPro" id="IPR036046">
    <property type="entry name" value="Acylphosphatase-like_dom_sf"/>
</dbReference>
<dbReference type="InterPro" id="IPR017968">
    <property type="entry name" value="Acylphosphatase_CS"/>
</dbReference>
<dbReference type="NCBIfam" id="NF011023">
    <property type="entry name" value="PRK14452.1"/>
    <property type="match status" value="1"/>
</dbReference>
<dbReference type="PANTHER" id="PTHR47268">
    <property type="entry name" value="ACYLPHOSPHATASE"/>
    <property type="match status" value="1"/>
</dbReference>
<dbReference type="PANTHER" id="PTHR47268:SF4">
    <property type="entry name" value="ACYLPHOSPHATASE"/>
    <property type="match status" value="1"/>
</dbReference>
<dbReference type="Pfam" id="PF00708">
    <property type="entry name" value="Acylphosphatase"/>
    <property type="match status" value="1"/>
</dbReference>
<dbReference type="PRINTS" id="PR00112">
    <property type="entry name" value="ACYLPHPHTASE"/>
</dbReference>
<dbReference type="SUPFAM" id="SSF54975">
    <property type="entry name" value="Acylphosphatase/BLUF domain-like"/>
    <property type="match status" value="1"/>
</dbReference>
<dbReference type="PROSITE" id="PS00150">
    <property type="entry name" value="ACYLPHOSPHATASE_1"/>
    <property type="match status" value="1"/>
</dbReference>
<dbReference type="PROSITE" id="PS00151">
    <property type="entry name" value="ACYLPHOSPHATASE_2"/>
    <property type="match status" value="1"/>
</dbReference>
<dbReference type="PROSITE" id="PS51160">
    <property type="entry name" value="ACYLPHOSPHATASE_3"/>
    <property type="match status" value="1"/>
</dbReference>
<reference key="1">
    <citation type="submission" date="2006-05" db="EMBL/GenBank/DDBJ databases">
        <authorList>
            <consortium name="Genoscope"/>
        </authorList>
    </citation>
    <scope>NUCLEOTIDE SEQUENCE [LARGE SCALE GENOMIC DNA]</scope>
    <source>
        <strain>WH7803</strain>
    </source>
</reference>
<proteinExistence type="inferred from homology"/>
<comment type="catalytic activity">
    <reaction>
        <text>an acyl phosphate + H2O = a carboxylate + phosphate + H(+)</text>
        <dbReference type="Rhea" id="RHEA:14965"/>
        <dbReference type="ChEBI" id="CHEBI:15377"/>
        <dbReference type="ChEBI" id="CHEBI:15378"/>
        <dbReference type="ChEBI" id="CHEBI:29067"/>
        <dbReference type="ChEBI" id="CHEBI:43474"/>
        <dbReference type="ChEBI" id="CHEBI:59918"/>
        <dbReference type="EC" id="3.6.1.7"/>
    </reaction>
</comment>
<comment type="similarity">
    <text evidence="2">Belongs to the acylphosphatase family.</text>
</comment>
<sequence length="100" mass="11315">MSRGKHKPTITTERWRFFVEGKVQGVGFRQGCCRRAMDLGLSGWVRNLPDGRVEVQAEGTPMALSELRLWCERGPADARVSQVRPSQLPITGADWFEIRS</sequence>
<name>ACYP_SYNPW</name>
<feature type="chain" id="PRO_0000326827" description="Acylphosphatase">
    <location>
        <begin position="1"/>
        <end position="100"/>
    </location>
</feature>
<feature type="domain" description="Acylphosphatase-like" evidence="1">
    <location>
        <begin position="14"/>
        <end position="100"/>
    </location>
</feature>
<feature type="active site" evidence="1">
    <location>
        <position position="29"/>
    </location>
</feature>
<feature type="active site" evidence="1">
    <location>
        <position position="47"/>
    </location>
</feature>
<evidence type="ECO:0000255" key="1">
    <source>
        <dbReference type="PROSITE-ProRule" id="PRU00520"/>
    </source>
</evidence>
<evidence type="ECO:0000305" key="2"/>
<keyword id="KW-0378">Hydrolase</keyword>
<keyword id="KW-1185">Reference proteome</keyword>
<protein>
    <recommendedName>
        <fullName>Acylphosphatase</fullName>
        <ecNumber>3.6.1.7</ecNumber>
    </recommendedName>
    <alternativeName>
        <fullName>Acylphosphate phosphohydrolase</fullName>
    </alternativeName>
</protein>
<organism>
    <name type="scientific">Synechococcus sp. (strain WH7803)</name>
    <dbReference type="NCBI Taxonomy" id="32051"/>
    <lineage>
        <taxon>Bacteria</taxon>
        <taxon>Bacillati</taxon>
        <taxon>Cyanobacteriota</taxon>
        <taxon>Cyanophyceae</taxon>
        <taxon>Synechococcales</taxon>
        <taxon>Synechococcaceae</taxon>
        <taxon>Synechococcus</taxon>
    </lineage>
</organism>